<protein>
    <recommendedName>
        <fullName evidence="1">Phosphoribosylaminoimidazole-succinocarboxamide synthase</fullName>
        <ecNumber evidence="1">6.3.2.6</ecNumber>
    </recommendedName>
    <alternativeName>
        <fullName evidence="1">SAICAR synthetase</fullName>
    </alternativeName>
</protein>
<name>PUR7_STAEQ</name>
<organism>
    <name type="scientific">Staphylococcus epidermidis (strain ATCC 35984 / DSM 28319 / BCRC 17069 / CCUG 31568 / BM 3577 / RP62A)</name>
    <dbReference type="NCBI Taxonomy" id="176279"/>
    <lineage>
        <taxon>Bacteria</taxon>
        <taxon>Bacillati</taxon>
        <taxon>Bacillota</taxon>
        <taxon>Bacilli</taxon>
        <taxon>Bacillales</taxon>
        <taxon>Staphylococcaceae</taxon>
        <taxon>Staphylococcus</taxon>
    </lineage>
</organism>
<comment type="catalytic activity">
    <reaction evidence="1">
        <text>5-amino-1-(5-phospho-D-ribosyl)imidazole-4-carboxylate + L-aspartate + ATP = (2S)-2-[5-amino-1-(5-phospho-beta-D-ribosyl)imidazole-4-carboxamido]succinate + ADP + phosphate + 2 H(+)</text>
        <dbReference type="Rhea" id="RHEA:22628"/>
        <dbReference type="ChEBI" id="CHEBI:15378"/>
        <dbReference type="ChEBI" id="CHEBI:29991"/>
        <dbReference type="ChEBI" id="CHEBI:30616"/>
        <dbReference type="ChEBI" id="CHEBI:43474"/>
        <dbReference type="ChEBI" id="CHEBI:58443"/>
        <dbReference type="ChEBI" id="CHEBI:77657"/>
        <dbReference type="ChEBI" id="CHEBI:456216"/>
        <dbReference type="EC" id="6.3.2.6"/>
    </reaction>
</comment>
<comment type="pathway">
    <text evidence="1">Purine metabolism; IMP biosynthesis via de novo pathway; 5-amino-1-(5-phospho-D-ribosyl)imidazole-4-carboxamide from 5-amino-1-(5-phospho-D-ribosyl)imidazole-4-carboxylate: step 1/2.</text>
</comment>
<comment type="similarity">
    <text evidence="1">Belongs to the SAICAR synthetase family.</text>
</comment>
<keyword id="KW-0067">ATP-binding</keyword>
<keyword id="KW-0436">Ligase</keyword>
<keyword id="KW-0547">Nucleotide-binding</keyword>
<keyword id="KW-0658">Purine biosynthesis</keyword>
<keyword id="KW-1185">Reference proteome</keyword>
<reference key="1">
    <citation type="journal article" date="2005" name="J. Bacteriol.">
        <title>Insights on evolution of virulence and resistance from the complete genome analysis of an early methicillin-resistant Staphylococcus aureus strain and a biofilm-producing methicillin-resistant Staphylococcus epidermidis strain.</title>
        <authorList>
            <person name="Gill S.R."/>
            <person name="Fouts D.E."/>
            <person name="Archer G.L."/>
            <person name="Mongodin E.F."/>
            <person name="DeBoy R.T."/>
            <person name="Ravel J."/>
            <person name="Paulsen I.T."/>
            <person name="Kolonay J.F."/>
            <person name="Brinkac L.M."/>
            <person name="Beanan M.J."/>
            <person name="Dodson R.J."/>
            <person name="Daugherty S.C."/>
            <person name="Madupu R."/>
            <person name="Angiuoli S.V."/>
            <person name="Durkin A.S."/>
            <person name="Haft D.H."/>
            <person name="Vamathevan J.J."/>
            <person name="Khouri H."/>
            <person name="Utterback T.R."/>
            <person name="Lee C."/>
            <person name="Dimitrov G."/>
            <person name="Jiang L."/>
            <person name="Qin H."/>
            <person name="Weidman J."/>
            <person name="Tran K."/>
            <person name="Kang K.H."/>
            <person name="Hance I.R."/>
            <person name="Nelson K.E."/>
            <person name="Fraser C.M."/>
        </authorList>
    </citation>
    <scope>NUCLEOTIDE SEQUENCE [LARGE SCALE GENOMIC DNA]</scope>
    <source>
        <strain>ATCC 35984 / DSM 28319 / BCRC 17069 / CCUG 31568 / BM 3577 / RP62A</strain>
    </source>
</reference>
<proteinExistence type="inferred from homology"/>
<evidence type="ECO:0000255" key="1">
    <source>
        <dbReference type="HAMAP-Rule" id="MF_00137"/>
    </source>
</evidence>
<gene>
    <name evidence="1" type="primary">purC</name>
    <name type="ordered locus">SERP0651</name>
</gene>
<sequence>MSLLYEGKAKRVFTTNIDGQLRVEYKDEVTAGNGAKKDTMIGKGKLNNQITSIIFDYLTHNHIDNHFIKQLSQTEQLVQQVDIIPLEVVVRNIATGSITKRLGFKKGHTFEEPLVEFFYKKDELNDPLITDDHVKLLGIANDEEIKQLKQMAKDINQVLIQLMNEMSLRLVDFKVEFGKTNGGKILLADEISPDTCRIWDKNTDTNFDKDVYRNNTGSLIETYQTFLNKLEDLK</sequence>
<accession>Q5HQA4</accession>
<feature type="chain" id="PRO_0000100876" description="Phosphoribosylaminoimidazole-succinocarboxamide synthase">
    <location>
        <begin position="1"/>
        <end position="234"/>
    </location>
</feature>
<dbReference type="EC" id="6.3.2.6" evidence="1"/>
<dbReference type="EMBL" id="CP000029">
    <property type="protein sequence ID" value="AAW53997.1"/>
    <property type="molecule type" value="Genomic_DNA"/>
</dbReference>
<dbReference type="RefSeq" id="WP_001831723.1">
    <property type="nucleotide sequence ID" value="NC_002976.3"/>
</dbReference>
<dbReference type="SMR" id="Q5HQA4"/>
<dbReference type="STRING" id="176279.SERP0651"/>
<dbReference type="GeneID" id="50019096"/>
<dbReference type="KEGG" id="ser:SERP0651"/>
<dbReference type="eggNOG" id="COG0152">
    <property type="taxonomic scope" value="Bacteria"/>
</dbReference>
<dbReference type="HOGENOM" id="CLU_061495_2_0_9"/>
<dbReference type="UniPathway" id="UPA00074">
    <property type="reaction ID" value="UER00131"/>
</dbReference>
<dbReference type="Proteomes" id="UP000000531">
    <property type="component" value="Chromosome"/>
</dbReference>
<dbReference type="GO" id="GO:0005524">
    <property type="term" value="F:ATP binding"/>
    <property type="evidence" value="ECO:0007669"/>
    <property type="project" value="UniProtKB-KW"/>
</dbReference>
<dbReference type="GO" id="GO:0004639">
    <property type="term" value="F:phosphoribosylaminoimidazolesuccinocarboxamide synthase activity"/>
    <property type="evidence" value="ECO:0007669"/>
    <property type="project" value="UniProtKB-UniRule"/>
</dbReference>
<dbReference type="GO" id="GO:0006189">
    <property type="term" value="P:'de novo' IMP biosynthetic process"/>
    <property type="evidence" value="ECO:0007669"/>
    <property type="project" value="UniProtKB-UniRule"/>
</dbReference>
<dbReference type="GO" id="GO:0009236">
    <property type="term" value="P:cobalamin biosynthetic process"/>
    <property type="evidence" value="ECO:0007669"/>
    <property type="project" value="InterPro"/>
</dbReference>
<dbReference type="CDD" id="cd01415">
    <property type="entry name" value="SAICAR_synt_PurC"/>
    <property type="match status" value="1"/>
</dbReference>
<dbReference type="FunFam" id="3.30.470.20:FF:000006">
    <property type="entry name" value="Phosphoribosylaminoimidazole-succinocarboxamide synthase"/>
    <property type="match status" value="1"/>
</dbReference>
<dbReference type="Gene3D" id="3.30.470.20">
    <property type="entry name" value="ATP-grasp fold, B domain"/>
    <property type="match status" value="1"/>
</dbReference>
<dbReference type="Gene3D" id="3.30.200.20">
    <property type="entry name" value="Phosphorylase Kinase, domain 1"/>
    <property type="match status" value="1"/>
</dbReference>
<dbReference type="HAMAP" id="MF_00137">
    <property type="entry name" value="SAICAR_synth"/>
    <property type="match status" value="1"/>
</dbReference>
<dbReference type="InterPro" id="IPR028923">
    <property type="entry name" value="SAICAR_synt/ADE2_N"/>
</dbReference>
<dbReference type="InterPro" id="IPR033934">
    <property type="entry name" value="SAICAR_synt_PurC"/>
</dbReference>
<dbReference type="InterPro" id="IPR001636">
    <property type="entry name" value="SAICAR_synth"/>
</dbReference>
<dbReference type="InterPro" id="IPR050089">
    <property type="entry name" value="SAICAR_synthetase"/>
</dbReference>
<dbReference type="InterPro" id="IPR018236">
    <property type="entry name" value="SAICAR_synthetase_CS"/>
</dbReference>
<dbReference type="NCBIfam" id="TIGR00081">
    <property type="entry name" value="purC"/>
    <property type="match status" value="1"/>
</dbReference>
<dbReference type="PANTHER" id="PTHR43599">
    <property type="entry name" value="MULTIFUNCTIONAL PROTEIN ADE2"/>
    <property type="match status" value="1"/>
</dbReference>
<dbReference type="PANTHER" id="PTHR43599:SF3">
    <property type="entry name" value="SI:DKEY-6E2.2"/>
    <property type="match status" value="1"/>
</dbReference>
<dbReference type="Pfam" id="PF01259">
    <property type="entry name" value="SAICAR_synt"/>
    <property type="match status" value="1"/>
</dbReference>
<dbReference type="SUPFAM" id="SSF56104">
    <property type="entry name" value="SAICAR synthase-like"/>
    <property type="match status" value="1"/>
</dbReference>
<dbReference type="PROSITE" id="PS01057">
    <property type="entry name" value="SAICAR_SYNTHETASE_1"/>
    <property type="match status" value="1"/>
</dbReference>